<dbReference type="EMBL" id="M32222">
    <property type="protein sequence ID" value="AAA72818.1"/>
    <property type="molecule type" value="Genomic_DNA"/>
</dbReference>
<dbReference type="PIR" id="S28373">
    <property type="entry name" value="S28373"/>
</dbReference>
<dbReference type="SMR" id="P21336"/>
<dbReference type="Gene3D" id="1.10.1040.10">
    <property type="entry name" value="N-(1-d-carboxylethyl)-l-norvaline Dehydrogenase, domain 2"/>
    <property type="match status" value="1"/>
</dbReference>
<dbReference type="Gene3D" id="3.40.50.720">
    <property type="entry name" value="NAD(P)-binding Rossmann-like Domain"/>
    <property type="match status" value="1"/>
</dbReference>
<dbReference type="InterPro" id="IPR008927">
    <property type="entry name" value="6-PGluconate_DH-like_C_sf"/>
</dbReference>
<dbReference type="InterPro" id="IPR013328">
    <property type="entry name" value="6PGD_dom2"/>
</dbReference>
<dbReference type="InterPro" id="IPR036291">
    <property type="entry name" value="NAD(P)-bd_dom_sf"/>
</dbReference>
<dbReference type="InterPro" id="IPR028939">
    <property type="entry name" value="P5C_Rdtase_cat_N"/>
</dbReference>
<dbReference type="InterPro" id="IPR015814">
    <property type="entry name" value="Pgluconate_DH_NAD-bd_C"/>
</dbReference>
<dbReference type="Pfam" id="PF09130">
    <property type="entry name" value="DUF1932"/>
    <property type="match status" value="1"/>
</dbReference>
<dbReference type="Pfam" id="PF03807">
    <property type="entry name" value="F420_oxidored"/>
    <property type="match status" value="1"/>
</dbReference>
<dbReference type="SUPFAM" id="SSF48179">
    <property type="entry name" value="6-phosphogluconate dehydrogenase C-terminal domain-like"/>
    <property type="match status" value="1"/>
</dbReference>
<dbReference type="SUPFAM" id="SSF51735">
    <property type="entry name" value="NAD(P)-binding Rossmann-fold domains"/>
    <property type="match status" value="1"/>
</dbReference>
<organism>
    <name type="scientific">Methanothermus fervidus</name>
    <dbReference type="NCBI Taxonomy" id="2180"/>
    <lineage>
        <taxon>Archaea</taxon>
        <taxon>Methanobacteriati</taxon>
        <taxon>Methanobacteriota</taxon>
        <taxon>Methanomada group</taxon>
        <taxon>Methanobacteria</taxon>
        <taxon>Methanobacteriales</taxon>
        <taxon>Methanothermaceae</taxon>
        <taxon>Methanothermus</taxon>
    </lineage>
</organism>
<accession>P21336</accession>
<reference key="1">
    <citation type="journal article" date="1990" name="Gene">
        <title>Genes encoding the 7S RNA and tRNA(Ser) are linked to one of the two rRNA operons in the genome of the extremely thermophilic archaebacterium Methanothermus fervidus.</title>
        <authorList>
            <person name="Haas E.S."/>
            <person name="Brown J.W."/>
            <person name="Daniels C.J."/>
            <person name="Reeve J.N."/>
        </authorList>
    </citation>
    <scope>NUCLEOTIDE SEQUENCE [GENOMIC DNA]</scope>
</reference>
<sequence length="251" mass="28515">MRIGFIGFGEVSSTLSQFFKDKVEVQTCVKGRSEKTKKIAKKLGVKIYKDYKDLVKNSDIVISAVTPFSALDVAKKYGKYVKGIYVDVNNVSPLTKHKILKYIDEEKFVDCAIIGRIKRKFKMICSGKNANKLKILEKFGVPIEVIGSKVGEASTLKMLRSLYTKSLAAILLEVFSVANKLGLIDELLEILEETEGKKFVDLCKSRVVGSFIHSRRRYEEICEIEKFILSHNLKPIMIKCTKNMFKHIEEC</sequence>
<feature type="chain" id="PRO_0000066097" description="Uncharacterized 28.5 kDa protein in 7S RNA 5'region">
    <location>
        <begin position="1"/>
        <end position="251"/>
    </location>
</feature>
<name>Y7SR_METFE</name>
<protein>
    <recommendedName>
        <fullName>Uncharacterized 28.5 kDa protein in 7S RNA 5'region</fullName>
    </recommendedName>
    <alternativeName>
        <fullName>ORF260</fullName>
    </alternativeName>
</protein>
<proteinExistence type="predicted"/>